<dbReference type="EC" id="1.18.1.2" evidence="1"/>
<dbReference type="EMBL" id="CU633749">
    <property type="protein sequence ID" value="CAQ70031.1"/>
    <property type="molecule type" value="Genomic_DNA"/>
</dbReference>
<dbReference type="RefSeq" id="WP_012353338.1">
    <property type="nucleotide sequence ID" value="NC_010528.1"/>
</dbReference>
<dbReference type="SMR" id="B3R5L8"/>
<dbReference type="GeneID" id="29762652"/>
<dbReference type="KEGG" id="cti:RALTA_A2094"/>
<dbReference type="eggNOG" id="COG0492">
    <property type="taxonomic scope" value="Bacteria"/>
</dbReference>
<dbReference type="HOGENOM" id="CLU_031864_5_5_4"/>
<dbReference type="BioCyc" id="CTAI977880:RALTA_RS10160-MONOMER"/>
<dbReference type="Proteomes" id="UP000001692">
    <property type="component" value="Chromosome 1"/>
</dbReference>
<dbReference type="GO" id="GO:0004324">
    <property type="term" value="F:ferredoxin-NADP+ reductase activity"/>
    <property type="evidence" value="ECO:0007669"/>
    <property type="project" value="UniProtKB-UniRule"/>
</dbReference>
<dbReference type="GO" id="GO:0050660">
    <property type="term" value="F:flavin adenine dinucleotide binding"/>
    <property type="evidence" value="ECO:0007669"/>
    <property type="project" value="UniProtKB-UniRule"/>
</dbReference>
<dbReference type="GO" id="GO:0050661">
    <property type="term" value="F:NADP binding"/>
    <property type="evidence" value="ECO:0007669"/>
    <property type="project" value="UniProtKB-UniRule"/>
</dbReference>
<dbReference type="Gene3D" id="3.50.50.60">
    <property type="entry name" value="FAD/NAD(P)-binding domain"/>
    <property type="match status" value="2"/>
</dbReference>
<dbReference type="HAMAP" id="MF_01685">
    <property type="entry name" value="FENR2"/>
    <property type="match status" value="1"/>
</dbReference>
<dbReference type="InterPro" id="IPR036188">
    <property type="entry name" value="FAD/NAD-bd_sf"/>
</dbReference>
<dbReference type="InterPro" id="IPR023753">
    <property type="entry name" value="FAD/NAD-binding_dom"/>
</dbReference>
<dbReference type="InterPro" id="IPR022890">
    <property type="entry name" value="Fd--NADP_Rdtase_type_2"/>
</dbReference>
<dbReference type="InterPro" id="IPR050097">
    <property type="entry name" value="Ferredoxin-NADP_redctase_2"/>
</dbReference>
<dbReference type="PANTHER" id="PTHR48105">
    <property type="entry name" value="THIOREDOXIN REDUCTASE 1-RELATED-RELATED"/>
    <property type="match status" value="1"/>
</dbReference>
<dbReference type="Pfam" id="PF07992">
    <property type="entry name" value="Pyr_redox_2"/>
    <property type="match status" value="1"/>
</dbReference>
<dbReference type="PRINTS" id="PR00368">
    <property type="entry name" value="FADPNR"/>
</dbReference>
<dbReference type="PRINTS" id="PR00469">
    <property type="entry name" value="PNDRDTASEII"/>
</dbReference>
<dbReference type="SUPFAM" id="SSF51905">
    <property type="entry name" value="FAD/NAD(P)-binding domain"/>
    <property type="match status" value="2"/>
</dbReference>
<accession>B3R5L8</accession>
<name>FENR2_CUPTR</name>
<comment type="catalytic activity">
    <reaction evidence="1">
        <text>2 reduced [2Fe-2S]-[ferredoxin] + NADP(+) + H(+) = 2 oxidized [2Fe-2S]-[ferredoxin] + NADPH</text>
        <dbReference type="Rhea" id="RHEA:20125"/>
        <dbReference type="Rhea" id="RHEA-COMP:10000"/>
        <dbReference type="Rhea" id="RHEA-COMP:10001"/>
        <dbReference type="ChEBI" id="CHEBI:15378"/>
        <dbReference type="ChEBI" id="CHEBI:33737"/>
        <dbReference type="ChEBI" id="CHEBI:33738"/>
        <dbReference type="ChEBI" id="CHEBI:57783"/>
        <dbReference type="ChEBI" id="CHEBI:58349"/>
        <dbReference type="EC" id="1.18.1.2"/>
    </reaction>
</comment>
<comment type="cofactor">
    <cofactor evidence="1">
        <name>FAD</name>
        <dbReference type="ChEBI" id="CHEBI:57692"/>
    </cofactor>
    <text evidence="1">Binds 1 FAD per subunit.</text>
</comment>
<comment type="subunit">
    <text evidence="1">Homodimer.</text>
</comment>
<comment type="similarity">
    <text evidence="1">Belongs to the ferredoxin--NADP reductase type 2 family.</text>
</comment>
<sequence length="369" mass="40311">MDLSIPNPVADATRQVEGGSPAGGQPLEIDALIVGAGPVGLFQVFELGLLEIKAHVIDSLKVVGGQCVELYPDKPIYDIPAVPSCTGQELTDNLLKQIEPFEPTFHLGQEVSVVERRDDGRFFVETSLGTRFITKTIFIAAGVGSFQPRTLKVDGIDKFDGKQLFYRVKDPSRFHGRNLVIVGGGDSALDWTLDLVGKAESVVMIHRRDGFRAAPASVAKMKELCEQMEMQFLVGQISGYEEKDGVLTEIKVSGADGVTRRLPLDDLLVFFGLSPKLGPIAEWGLDLERKQIKVDTEKFQTNIPGIFAVGDINTYPGKKKLILSGFHEAALAAFGAAPYIFPEKKIHMQYTTTSPKLHKVLGVESPVFD</sequence>
<protein>
    <recommendedName>
        <fullName evidence="1">Ferredoxin--NADP reductase 2</fullName>
        <shortName evidence="1">FNR 2</shortName>
        <shortName evidence="1">Fd-NADP(+) reductase 2</shortName>
        <ecNumber evidence="1">1.18.1.2</ecNumber>
    </recommendedName>
</protein>
<evidence type="ECO:0000255" key="1">
    <source>
        <dbReference type="HAMAP-Rule" id="MF_01685"/>
    </source>
</evidence>
<evidence type="ECO:0000256" key="2">
    <source>
        <dbReference type="SAM" id="MobiDB-lite"/>
    </source>
</evidence>
<keyword id="KW-0274">FAD</keyword>
<keyword id="KW-0285">Flavoprotein</keyword>
<keyword id="KW-0521">NADP</keyword>
<keyword id="KW-0560">Oxidoreductase</keyword>
<proteinExistence type="inferred from homology"/>
<feature type="chain" id="PRO_0000364826" description="Ferredoxin--NADP reductase 2">
    <location>
        <begin position="1"/>
        <end position="369"/>
    </location>
</feature>
<feature type="region of interest" description="Disordered" evidence="2">
    <location>
        <begin position="1"/>
        <end position="21"/>
    </location>
</feature>
<feature type="binding site" evidence="1">
    <location>
        <position position="58"/>
    </location>
    <ligand>
        <name>FAD</name>
        <dbReference type="ChEBI" id="CHEBI:57692"/>
    </ligand>
</feature>
<feature type="binding site" evidence="1">
    <location>
        <position position="66"/>
    </location>
    <ligand>
        <name>FAD</name>
        <dbReference type="ChEBI" id="CHEBI:57692"/>
    </ligand>
</feature>
<feature type="binding site" evidence="1">
    <location>
        <position position="71"/>
    </location>
    <ligand>
        <name>FAD</name>
        <dbReference type="ChEBI" id="CHEBI:57692"/>
    </ligand>
</feature>
<feature type="binding site" evidence="1">
    <location>
        <position position="111"/>
    </location>
    <ligand>
        <name>FAD</name>
        <dbReference type="ChEBI" id="CHEBI:57692"/>
    </ligand>
</feature>
<feature type="binding site" evidence="1">
    <location>
        <position position="146"/>
    </location>
    <ligand>
        <name>FAD</name>
        <dbReference type="ChEBI" id="CHEBI:57692"/>
    </ligand>
</feature>
<feature type="binding site" evidence="1">
    <location>
        <position position="311"/>
    </location>
    <ligand>
        <name>FAD</name>
        <dbReference type="ChEBI" id="CHEBI:57692"/>
    </ligand>
</feature>
<feature type="binding site" evidence="1">
    <location>
        <position position="352"/>
    </location>
    <ligand>
        <name>FAD</name>
        <dbReference type="ChEBI" id="CHEBI:57692"/>
    </ligand>
</feature>
<reference key="1">
    <citation type="journal article" date="2008" name="Genome Res.">
        <title>Genome sequence of the beta-rhizobium Cupriavidus taiwanensis and comparative genomics of rhizobia.</title>
        <authorList>
            <person name="Amadou C."/>
            <person name="Pascal G."/>
            <person name="Mangenot S."/>
            <person name="Glew M."/>
            <person name="Bontemps C."/>
            <person name="Capela D."/>
            <person name="Carrere S."/>
            <person name="Cruveiller S."/>
            <person name="Dossat C."/>
            <person name="Lajus A."/>
            <person name="Marchetti M."/>
            <person name="Poinsot V."/>
            <person name="Rouy Z."/>
            <person name="Servin B."/>
            <person name="Saad M."/>
            <person name="Schenowitz C."/>
            <person name="Barbe V."/>
            <person name="Batut J."/>
            <person name="Medigue C."/>
            <person name="Masson-Boivin C."/>
        </authorList>
    </citation>
    <scope>NUCLEOTIDE SEQUENCE [LARGE SCALE GENOMIC DNA]</scope>
    <source>
        <strain>DSM 17343 / BCRC 17206 / CCUG 44338 / CIP 107171 / LMG 19424 / R1</strain>
    </source>
</reference>
<organism>
    <name type="scientific">Cupriavidus taiwanensis (strain DSM 17343 / BCRC 17206 / CCUG 44338 / CIP 107171 / LMG 19424 / R1)</name>
    <name type="common">Ralstonia taiwanensis (strain LMG 19424)</name>
    <dbReference type="NCBI Taxonomy" id="977880"/>
    <lineage>
        <taxon>Bacteria</taxon>
        <taxon>Pseudomonadati</taxon>
        <taxon>Pseudomonadota</taxon>
        <taxon>Betaproteobacteria</taxon>
        <taxon>Burkholderiales</taxon>
        <taxon>Burkholderiaceae</taxon>
        <taxon>Cupriavidus</taxon>
    </lineage>
</organism>
<gene>
    <name type="ordered locus">RALTA_A2094</name>
</gene>